<reference key="1">
    <citation type="journal article" date="2009" name="Genome Biol.">
        <title>Genomic and genetic analyses of diversity and plant interactions of Pseudomonas fluorescens.</title>
        <authorList>
            <person name="Silby M.W."/>
            <person name="Cerdeno-Tarraga A.M."/>
            <person name="Vernikos G.S."/>
            <person name="Giddens S.R."/>
            <person name="Jackson R.W."/>
            <person name="Preston G.M."/>
            <person name="Zhang X.-X."/>
            <person name="Moon C.D."/>
            <person name="Gehrig S.M."/>
            <person name="Godfrey S.A.C."/>
            <person name="Knight C.G."/>
            <person name="Malone J.G."/>
            <person name="Robinson Z."/>
            <person name="Spiers A.J."/>
            <person name="Harris S."/>
            <person name="Challis G.L."/>
            <person name="Yaxley A.M."/>
            <person name="Harris D."/>
            <person name="Seeger K."/>
            <person name="Murphy L."/>
            <person name="Rutter S."/>
            <person name="Squares R."/>
            <person name="Quail M.A."/>
            <person name="Saunders E."/>
            <person name="Mavromatis K."/>
            <person name="Brettin T.S."/>
            <person name="Bentley S.D."/>
            <person name="Hothersall J."/>
            <person name="Stephens E."/>
            <person name="Thomas C.M."/>
            <person name="Parkhill J."/>
            <person name="Levy S.B."/>
            <person name="Rainey P.B."/>
            <person name="Thomson N.R."/>
        </authorList>
    </citation>
    <scope>NUCLEOTIDE SEQUENCE [LARGE SCALE GENOMIC DNA]</scope>
    <source>
        <strain>SBW25</strain>
    </source>
</reference>
<evidence type="ECO:0000255" key="1">
    <source>
        <dbReference type="HAMAP-Rule" id="MF_00715"/>
    </source>
</evidence>
<sequence length="68" mass="7920">MDLQDRVTDLESRLAFQDDTIETLNDILVTQQRAVERLQLQMTALLKRQEEMGGQFETSEEEAPPPHY</sequence>
<name>SLYX_PSEFS</name>
<feature type="chain" id="PRO_1000212683" description="Protein SlyX homolog">
    <location>
        <begin position="1"/>
        <end position="68"/>
    </location>
</feature>
<accession>C3JYT7</accession>
<organism>
    <name type="scientific">Pseudomonas fluorescens (strain SBW25)</name>
    <dbReference type="NCBI Taxonomy" id="216595"/>
    <lineage>
        <taxon>Bacteria</taxon>
        <taxon>Pseudomonadati</taxon>
        <taxon>Pseudomonadota</taxon>
        <taxon>Gammaproteobacteria</taxon>
        <taxon>Pseudomonadales</taxon>
        <taxon>Pseudomonadaceae</taxon>
        <taxon>Pseudomonas</taxon>
    </lineage>
</organism>
<gene>
    <name evidence="1" type="primary">slyX</name>
    <name type="ordered locus">PFLU_4923</name>
</gene>
<protein>
    <recommendedName>
        <fullName evidence="1">Protein SlyX homolog</fullName>
    </recommendedName>
</protein>
<proteinExistence type="inferred from homology"/>
<comment type="similarity">
    <text evidence="1">Belongs to the SlyX family.</text>
</comment>
<dbReference type="EMBL" id="AM181176">
    <property type="protein sequence ID" value="CAY51837.1"/>
    <property type="molecule type" value="Genomic_DNA"/>
</dbReference>
<dbReference type="RefSeq" id="WP_015885618.1">
    <property type="nucleotide sequence ID" value="NC_012660.1"/>
</dbReference>
<dbReference type="SMR" id="C3JYT7"/>
<dbReference type="STRING" id="294.SRM1_04353"/>
<dbReference type="eggNOG" id="COG2900">
    <property type="taxonomic scope" value="Bacteria"/>
</dbReference>
<dbReference type="HOGENOM" id="CLU_180796_4_1_6"/>
<dbReference type="OrthoDB" id="8606883at2"/>
<dbReference type="Gene3D" id="1.20.5.300">
    <property type="match status" value="1"/>
</dbReference>
<dbReference type="HAMAP" id="MF_00715">
    <property type="entry name" value="SlyX"/>
    <property type="match status" value="1"/>
</dbReference>
<dbReference type="InterPro" id="IPR007236">
    <property type="entry name" value="SlyX"/>
</dbReference>
<dbReference type="NCBIfam" id="NF001421">
    <property type="entry name" value="PRK00295.1"/>
    <property type="match status" value="1"/>
</dbReference>
<dbReference type="PANTHER" id="PTHR36508">
    <property type="entry name" value="PROTEIN SLYX"/>
    <property type="match status" value="1"/>
</dbReference>
<dbReference type="PANTHER" id="PTHR36508:SF1">
    <property type="entry name" value="PROTEIN SLYX"/>
    <property type="match status" value="1"/>
</dbReference>
<dbReference type="Pfam" id="PF04102">
    <property type="entry name" value="SlyX"/>
    <property type="match status" value="1"/>
</dbReference>